<organism>
    <name type="scientific">Human immunodeficiency virus type 1 group M subtype A (isolate U455)</name>
    <name type="common">HIV-1</name>
    <dbReference type="NCBI Taxonomy" id="11703"/>
    <lineage>
        <taxon>Viruses</taxon>
        <taxon>Riboviria</taxon>
        <taxon>Pararnavirae</taxon>
        <taxon>Artverviricota</taxon>
        <taxon>Revtraviricetes</taxon>
        <taxon>Ortervirales</taxon>
        <taxon>Retroviridae</taxon>
        <taxon>Orthoretrovirinae</taxon>
        <taxon>Lentivirus</taxon>
        <taxon>Human immunodeficiency virus type 1</taxon>
    </lineage>
</organism>
<reference key="1">
    <citation type="journal article" date="1990" name="AIDS Res. Hum. Retroviruses">
        <title>Nucleotide sequence of a Ugandan HIV-1 provirus reveals genetic diversity from other HIV-1 isolates.</title>
        <authorList>
            <person name="Oram J.D."/>
            <person name="Downing R.G."/>
            <person name="Roff M."/>
            <person name="Clegg J.C.S."/>
            <person name="Serwadda D."/>
            <person name="Carswell J.W."/>
        </authorList>
    </citation>
    <scope>NUCLEOTIDE SEQUENCE [GENOMIC DNA]</scope>
</reference>
<proteinExistence type="inferred from homology"/>
<name>NEF_HV1U4</name>
<protein>
    <recommendedName>
        <fullName evidence="1">Protein Nef</fullName>
    </recommendedName>
    <alternativeName>
        <fullName evidence="1">3'ORF</fullName>
    </alternativeName>
    <alternativeName>
        <fullName evidence="1">Negative factor</fullName>
        <shortName evidence="1">F-protein</shortName>
    </alternativeName>
    <component>
        <recommendedName>
            <fullName evidence="1">C-terminal core protein</fullName>
        </recommendedName>
    </component>
</protein>
<sequence length="205" mass="23253">MGGKWSKKSRVEWPEVRKRMRETPAAAKGVGAVSQDLDKYGAVTSSNTSSTNASCAWLEAQEEGDVGFPVRPQVPLRPMTYKAAFDLSFFLKEKGGLDGLIHSQKRQEILDLWVYHTQGFFPDWQNYTPGPGIRYPLTFGWCYKLVPVDPAEVEEATGGENNSLLHPICQHGVDDEEKEVLMWKFDSTLALKHRAYELHPEFYKD</sequence>
<organismHost>
    <name type="scientific">Homo sapiens</name>
    <name type="common">Human</name>
    <dbReference type="NCBI Taxonomy" id="9606"/>
</organismHost>
<comment type="function">
    <text evidence="1">Factor of infectivity and pathogenicity, required for optimal virus replication. Alters numerous pathways of T-lymphocyte function and down-regulates immunity surface molecules in order to evade host defense and increase viral infectivity. Alters the functionality of other immunity cells, like dendritic cells, monocytes/macrophages and NK cells.</text>
</comment>
<comment type="function">
    <text evidence="1">In infected CD4(+) T-lymphocytes, down-regulates the surface MHC-I, mature MHC-II, CD4, CD28, CCR5 and CXCR4 molecules. Mediates internalization and degradation of host CD4 through the interaction of with the cytoplasmic tail of CD4, the recruitment of AP-2 (clathrin adapter protein complex 2), internalization through clathrin coated pits, and subsequent transport to endosomes and lysosomes for degradation. Diverts host MHC-I molecules to the trans-Golgi network-associated endosomal compartments by an endocytic pathway to finally target them for degradation. MHC-I down-regulation may involve AP-1 (clathrin adapter protein complex 1) or possibly Src family kinase-ZAP70/Syk-PI3K cascade recruited by PACS2. In consequence infected cells are masked for immune recognition by cytotoxic T-lymphocytes. Decreasing the number of immune receptors also prevents reinfection by more HIV particles (superinfection). Down-regulates host SERINC3 and SERINC5 thereby excluding these proteins from the viral particles. Virion infectivity is drastically higher when SERINC3 or SERINC5 are excluded from the viral envelope, because these host antiviral proteins impair the membrane fusion event necessary for subsequent virion penetration.</text>
</comment>
<comment type="function">
    <text evidence="1">Bypasses host T-cell signaling by inducing a transcriptional program nearly identical to that of anti-CD3 cell activation. Interaction with TCR-zeta chain up-regulates the Fas ligand (FasL). Increasing surface FasL molecules and decreasing surface MHC-I molecules on infected CD4(+) cells send attacking cytotoxic CD8+ T-lymphocytes into apoptosis.</text>
</comment>
<comment type="function">
    <text evidence="1">Plays a role in optimizing the host cell environment for viral replication without causing cell death by apoptosis. Protects the infected cells from apoptosis in order to keep them alive until the next virus generation is ready to strike. Inhibits the Fas and TNFR-mediated death signals by blocking MAP3K5/ASK1. Decreases the half-life of TP53, protecting the infected cell against p53-mediated apoptosis. Inhibits the apoptotic signals regulated by the Bcl-2 family proteins through the formation of a Nef/PI3-kinase/PAK2 complex that leads to activation of PAK2 and induces phosphorylation of host BAD.</text>
</comment>
<comment type="function">
    <text evidence="1">Extracellular Nef protein targets CD4(+) T-lymphocytes for apoptosis by interacting with CXCR4 surface receptors.</text>
</comment>
<comment type="subunit">
    <text evidence="1">Monomer; cytosolic form. Homodimer; membrane bound form. Interacts with Nef associated p21-activated kinase (PAK2); this interaction activates PAK2. Associates with the Nef-MHC-I-AP1 complex; this complex is required for MHC-I internalization. Interacts (via C-terminus) with host PI3-kinase. Interacts with host PACS1; this interaction seems to be weak. Interacts with host PACS2. Interacts with host LCK and MAPK3; these interactions inhibit the kinase activity of the latter. Interacts with host ATP6V1H; this interaction may play a role in CD4 endocytosis. Associates with the CD4-Nef-AP2 complex; this complex is required for CD4 internalization. Interacts with host AP2 subunit alpha and AP2 subunit sigma2. Interacts with TCR-zeta chain; this interaction up-regulates the Fas ligand (FasL) surface expression. Interacts with host HCK, LYN, and SRC; these interactions activate the Src family kinases. Interacts with MAP3K5; this interaction inhibits the Fas and TNFR-mediated death signals. Interacts with beta-COP and PTE1. Interacts with human RACK1; this increases Nef phosphorylation by PKC. Interacts with TP53; this interaction decreases the half-life of TP53, protecting the infected cell against p53-mediated apoptosis.</text>
</comment>
<comment type="subcellular location">
    <subcellularLocation>
        <location evidence="1">Host cell membrane</location>
        <topology evidence="1">Lipid-anchor</topology>
        <orientation evidence="1">Cytoplasmic side</orientation>
    </subcellularLocation>
    <subcellularLocation>
        <location evidence="1">Virion</location>
    </subcellularLocation>
    <subcellularLocation>
        <location evidence="1">Secreted</location>
    </subcellularLocation>
    <subcellularLocation>
        <location evidence="1">Host Golgi apparatus membrane</location>
    </subcellularLocation>
    <text evidence="1">TGN localization requires PACS1. Associates with the inner plasma membrane through its N-terminal domain. Nef stimulates its own export via the release of exosomes. Incorporated in virions at a rate of about 10 molecules per virion, where it is cleaved.</text>
</comment>
<comment type="induction">
    <text evidence="1">Expressed early in the viral replication cycle.</text>
</comment>
<comment type="domain">
    <text evidence="1">The N-terminal domain is composed of the N-myristoyl glycine and of a cluster of positively charged amino acids. It is required for inner plasma membrane targeting of Nef and virion incorporation, and thereby for infectivity. This domain is also involved in binding to TP53.</text>
</comment>
<comment type="domain">
    <text evidence="1">The SH3-binding domain constituted of PxxP motifs mediates binding to several Src family proteins thereby regulating their tyrosine kinase activity. The same motifs also mediates the association with MAPK3, PI3-kinase and TCR-zeta.</text>
</comment>
<comment type="domain">
    <text evidence="1">The dileucine internalization motif and a diacidic motif seem to be required for binding to AP-2.</text>
</comment>
<comment type="domain">
    <text evidence="1">The acidic region binds to the sorting protein PACS-2, which targets Nef to the paranuclear region, enabling the PxxP motif to direct assembly of an SFK/ZAP-70/PI3K complex that accelerates endocytosis of cell-surface MHC-I.</text>
</comment>
<comment type="PTM">
    <text evidence="1">The virion-associated Nef proteins are cleaved by the viral protease to release the soluble C-terminal core protein. Nef is probably cleaved concomitantly with viral structural proteins on maturation of virus particles.</text>
</comment>
<comment type="PTM">
    <text evidence="1">Myristoylated.</text>
</comment>
<comment type="PTM">
    <text evidence="1">Phosphorylated on serine residues, probably by host PKCdelta and theta.</text>
</comment>
<comment type="miscellaneous">
    <text evidence="1">HIV-1 lineages are divided in three main groups, M (for Major), O (for Outlier), and N (for New, or Non-M, Non-O). The vast majority of strains found worldwide belong to the group M. Group O seems to be endemic to and largely confined to Cameroon and neighboring countries in West Central Africa, where these viruses represent a small minority of HIV-1 strains. The group N is represented by a limited number of isolates from Cameroonian persons. The group M is further subdivided in 9 clades or subtypes (A to D, F to H, J and K).</text>
</comment>
<comment type="similarity">
    <text evidence="1">Belongs to the lentivirus primate group Nef protein family.</text>
</comment>
<gene>
    <name evidence="1" type="primary">nef</name>
</gene>
<evidence type="ECO:0000255" key="1">
    <source>
        <dbReference type="HAMAP-Rule" id="MF_04078"/>
    </source>
</evidence>
<feature type="initiator methionine" description="Removed; by host" evidence="1">
    <location>
        <position position="1"/>
    </location>
</feature>
<feature type="chain" id="PRO_0000038363" description="Protein Nef" evidence="1">
    <location>
        <begin position="2"/>
        <end position="205"/>
    </location>
</feature>
<feature type="chain" id="PRO_0000038364" description="C-terminal core protein" evidence="1">
    <location>
        <begin position="58"/>
        <end position="205"/>
    </location>
</feature>
<feature type="region of interest" description="Acidic; interacts with host PACS1 and PACS2; stabilizes the interaction of NEF/MHC-I with host AP1M1; necessary for MHC-I internalization" evidence="1">
    <location>
        <begin position="62"/>
        <end position="65"/>
    </location>
</feature>
<feature type="region of interest" description="SH3-binding; interaction with Src family tyrosine kinases" evidence="1">
    <location>
        <begin position="69"/>
        <end position="78"/>
    </location>
</feature>
<feature type="region of interest" description="Mediates dimerization, Nef-PTE1 interaction" evidence="1">
    <location>
        <begin position="108"/>
        <end position="124"/>
    </location>
</feature>
<feature type="region of interest" description="Binding to ATP6V1H" evidence="1">
    <location>
        <begin position="148"/>
        <end position="180"/>
    </location>
</feature>
<feature type="short sequence motif" description="PxxP; stabilizes the interaction of NEF/MHC-I with host AP1M1; necessary for MHC-I internalization" evidence="1">
    <location>
        <begin position="72"/>
        <end position="75"/>
    </location>
</feature>
<feature type="short sequence motif" description="Dileucine internalization motif; necessary for CD4 internalization" evidence="1">
    <location>
        <begin position="164"/>
        <end position="165"/>
    </location>
</feature>
<feature type="short sequence motif" description="Diacidic; necessary for CD4 internalization" evidence="1">
    <location>
        <begin position="174"/>
        <end position="175"/>
    </location>
</feature>
<feature type="site" description="Might play a role in AP-1 recruitment to the Nef-MHC-I complex" evidence="1">
    <location>
        <position position="20"/>
    </location>
</feature>
<feature type="site" description="Cleavage; by viral protease" evidence="1">
    <location>
        <begin position="57"/>
        <end position="58"/>
    </location>
</feature>
<feature type="modified residue" description="Phosphoserine; by host" evidence="1">
    <location>
        <position position="6"/>
    </location>
</feature>
<feature type="lipid moiety-binding region" description="N-myristoyl glycine; by host" evidence="1">
    <location>
        <position position="2"/>
    </location>
</feature>
<dbReference type="EMBL" id="M62320">
    <property type="protein sequence ID" value="AAA75023.1"/>
    <property type="molecule type" value="Genomic_DNA"/>
</dbReference>
<dbReference type="SMR" id="P24741"/>
<dbReference type="IntAct" id="P24741">
    <property type="interactions" value="1"/>
</dbReference>
<dbReference type="Proteomes" id="UP000134285">
    <property type="component" value="Segment"/>
</dbReference>
<dbReference type="GO" id="GO:0005576">
    <property type="term" value="C:extracellular region"/>
    <property type="evidence" value="ECO:0007669"/>
    <property type="project" value="UniProtKB-SubCell"/>
</dbReference>
<dbReference type="GO" id="GO:0044178">
    <property type="term" value="C:host cell Golgi membrane"/>
    <property type="evidence" value="ECO:0007669"/>
    <property type="project" value="UniProtKB-SubCell"/>
</dbReference>
<dbReference type="GO" id="GO:0020002">
    <property type="term" value="C:host cell plasma membrane"/>
    <property type="evidence" value="ECO:0007669"/>
    <property type="project" value="UniProtKB-SubCell"/>
</dbReference>
<dbReference type="GO" id="GO:0016020">
    <property type="term" value="C:membrane"/>
    <property type="evidence" value="ECO:0007669"/>
    <property type="project" value="UniProtKB-UniRule"/>
</dbReference>
<dbReference type="GO" id="GO:0044423">
    <property type="term" value="C:virion component"/>
    <property type="evidence" value="ECO:0007669"/>
    <property type="project" value="UniProtKB-UniRule"/>
</dbReference>
<dbReference type="GO" id="GO:0005525">
    <property type="term" value="F:GTP binding"/>
    <property type="evidence" value="ECO:0007669"/>
    <property type="project" value="UniProtKB-UniRule"/>
</dbReference>
<dbReference type="GO" id="GO:0017124">
    <property type="term" value="F:SH3 domain binding"/>
    <property type="evidence" value="ECO:0007669"/>
    <property type="project" value="UniProtKB-UniRule"/>
</dbReference>
<dbReference type="GO" id="GO:0046776">
    <property type="term" value="P:symbiont-mediated suppression of host antigen processing and presentation of peptide antigen via MHC class I"/>
    <property type="evidence" value="ECO:0007669"/>
    <property type="project" value="UniProtKB-UniRule"/>
</dbReference>
<dbReference type="GO" id="GO:0039505">
    <property type="term" value="P:symbiont-mediated suppression of host antigen processing and presentation of peptide antigen via MHC class II"/>
    <property type="evidence" value="ECO:0007669"/>
    <property type="project" value="UniProtKB-UniRule"/>
</dbReference>
<dbReference type="GO" id="GO:0140321">
    <property type="term" value="P:symbiont-mediated suppression of host autophagy"/>
    <property type="evidence" value="ECO:0007669"/>
    <property type="project" value="UniProtKB-KW"/>
</dbReference>
<dbReference type="Gene3D" id="4.10.890.10">
    <property type="entry name" value="HIV 1 nef anchor domain"/>
    <property type="match status" value="1"/>
</dbReference>
<dbReference type="Gene3D" id="3.30.62.10">
    <property type="entry name" value="Nef Regulatory Factor"/>
    <property type="match status" value="1"/>
</dbReference>
<dbReference type="HAMAP" id="MF_04078">
    <property type="entry name" value="NEF_HIV"/>
    <property type="match status" value="1"/>
</dbReference>
<dbReference type="InterPro" id="IPR027480">
    <property type="entry name" value="HIV-1_Nef_anchor_sf"/>
</dbReference>
<dbReference type="InterPro" id="IPR027481">
    <property type="entry name" value="HIV-1_Nef_core_sf"/>
</dbReference>
<dbReference type="InterPro" id="IPR001558">
    <property type="entry name" value="HIV_Nef"/>
</dbReference>
<dbReference type="Pfam" id="PF00469">
    <property type="entry name" value="F-protein"/>
    <property type="match status" value="1"/>
</dbReference>
<dbReference type="SUPFAM" id="SSF55671">
    <property type="entry name" value="Regulatory factor Nef"/>
    <property type="match status" value="1"/>
</dbReference>
<keyword id="KW-0014">AIDS</keyword>
<keyword id="KW-0053">Apoptosis</keyword>
<keyword id="KW-0244">Early protein</keyword>
<keyword id="KW-1032">Host cell membrane</keyword>
<keyword id="KW-1040">Host Golgi apparatus</keyword>
<keyword id="KW-1043">Host membrane</keyword>
<keyword id="KW-0945">Host-virus interaction</keyword>
<keyword id="KW-1080">Inhibition of host adaptive immune response by virus</keyword>
<keyword id="KW-1083">Inhibition of host autophagy by virus</keyword>
<keyword id="KW-1115">Inhibition of host MHC class I molecule presentation by virus</keyword>
<keyword id="KW-1116">Inhibition of host MHC class II molecule presentation by virus</keyword>
<keyword id="KW-0449">Lipoprotein</keyword>
<keyword id="KW-0472">Membrane</keyword>
<keyword id="KW-0519">Myristate</keyword>
<keyword id="KW-0597">Phosphoprotein</keyword>
<keyword id="KW-1185">Reference proteome</keyword>
<keyword id="KW-0964">Secreted</keyword>
<keyword id="KW-0729">SH3-binding</keyword>
<keyword id="KW-0899">Viral immunoevasion</keyword>
<keyword id="KW-0946">Virion</keyword>
<keyword id="KW-0843">Virulence</keyword>
<accession>P24741</accession>